<protein>
    <recommendedName>
        <fullName evidence="1">Putative membrane protein insertion efficiency factor</fullName>
    </recommendedName>
</protein>
<accession>Q8YH92</accession>
<feature type="chain" id="PRO_0000171801" description="Putative membrane protein insertion efficiency factor">
    <location>
        <begin position="1"/>
        <end position="123"/>
    </location>
</feature>
<feature type="region of interest" description="Disordered" evidence="2">
    <location>
        <begin position="1"/>
        <end position="23"/>
    </location>
</feature>
<comment type="function">
    <text evidence="1">Could be involved in insertion of integral membrane proteins into the membrane.</text>
</comment>
<comment type="subcellular location">
    <subcellularLocation>
        <location evidence="1">Cell inner membrane</location>
        <topology evidence="1">Peripheral membrane protein</topology>
        <orientation evidence="1">Cytoplasmic side</orientation>
    </subcellularLocation>
</comment>
<comment type="similarity">
    <text evidence="1">Belongs to the UPF0161 family.</text>
</comment>
<gene>
    <name type="ordered locus">BMEI0912</name>
</gene>
<sequence length="123" mass="14061">MGSCGGKHTGKGAPKPYSRNFTDPWRKTPGRLFGTALIRFYQITLSSLIGNSCRHLPTCSEYAYEAIARHGLWRGGWMGFFRVVRCGPFGTHGFDPVPRELSPDLKWYMPWRYWRCSASRIGK</sequence>
<reference key="1">
    <citation type="journal article" date="2002" name="Proc. Natl. Acad. Sci. U.S.A.">
        <title>The genome sequence of the facultative intracellular pathogen Brucella melitensis.</title>
        <authorList>
            <person name="DelVecchio V.G."/>
            <person name="Kapatral V."/>
            <person name="Redkar R.J."/>
            <person name="Patra G."/>
            <person name="Mujer C."/>
            <person name="Los T."/>
            <person name="Ivanova N."/>
            <person name="Anderson I."/>
            <person name="Bhattacharyya A."/>
            <person name="Lykidis A."/>
            <person name="Reznik G."/>
            <person name="Jablonski L."/>
            <person name="Larsen N."/>
            <person name="D'Souza M."/>
            <person name="Bernal A."/>
            <person name="Mazur M."/>
            <person name="Goltsman E."/>
            <person name="Selkov E."/>
            <person name="Elzer P.H."/>
            <person name="Hagius S."/>
            <person name="O'Callaghan D."/>
            <person name="Letesson J.-J."/>
            <person name="Haselkorn R."/>
            <person name="Kyrpides N.C."/>
            <person name="Overbeek R."/>
        </authorList>
    </citation>
    <scope>NUCLEOTIDE SEQUENCE [LARGE SCALE GENOMIC DNA]</scope>
    <source>
        <strain>ATCC 23456 / CCUG 17765 / NCTC 10094 / 16M</strain>
    </source>
</reference>
<evidence type="ECO:0000255" key="1">
    <source>
        <dbReference type="HAMAP-Rule" id="MF_00386"/>
    </source>
</evidence>
<evidence type="ECO:0000256" key="2">
    <source>
        <dbReference type="SAM" id="MobiDB-lite"/>
    </source>
</evidence>
<dbReference type="EMBL" id="AE008917">
    <property type="protein sequence ID" value="AAL52093.1"/>
    <property type="molecule type" value="Genomic_DNA"/>
</dbReference>
<dbReference type="PIR" id="AB3366">
    <property type="entry name" value="AB3366"/>
</dbReference>
<dbReference type="KEGG" id="bme:BMEI0912"/>
<dbReference type="KEGG" id="bmel:DK63_510"/>
<dbReference type="PATRIC" id="fig|224914.52.peg.533"/>
<dbReference type="eggNOG" id="COG0759">
    <property type="taxonomic scope" value="Bacteria"/>
</dbReference>
<dbReference type="PhylomeDB" id="Q8YH92"/>
<dbReference type="Proteomes" id="UP000000419">
    <property type="component" value="Chromosome I"/>
</dbReference>
<dbReference type="GO" id="GO:0005886">
    <property type="term" value="C:plasma membrane"/>
    <property type="evidence" value="ECO:0007669"/>
    <property type="project" value="UniProtKB-SubCell"/>
</dbReference>
<dbReference type="HAMAP" id="MF_00386">
    <property type="entry name" value="UPF0161_YidD"/>
    <property type="match status" value="1"/>
</dbReference>
<dbReference type="InterPro" id="IPR002696">
    <property type="entry name" value="Membr_insert_effic_factor_YidD"/>
</dbReference>
<dbReference type="NCBIfam" id="TIGR00278">
    <property type="entry name" value="membrane protein insertion efficiency factor YidD"/>
    <property type="match status" value="1"/>
</dbReference>
<dbReference type="PANTHER" id="PTHR33383">
    <property type="entry name" value="MEMBRANE PROTEIN INSERTION EFFICIENCY FACTOR-RELATED"/>
    <property type="match status" value="1"/>
</dbReference>
<dbReference type="PANTHER" id="PTHR33383:SF1">
    <property type="entry name" value="MEMBRANE PROTEIN INSERTION EFFICIENCY FACTOR-RELATED"/>
    <property type="match status" value="1"/>
</dbReference>
<dbReference type="Pfam" id="PF01809">
    <property type="entry name" value="YidD"/>
    <property type="match status" value="1"/>
</dbReference>
<dbReference type="SMART" id="SM01234">
    <property type="entry name" value="Haemolytic"/>
    <property type="match status" value="1"/>
</dbReference>
<name>YIDD_BRUME</name>
<proteinExistence type="inferred from homology"/>
<organism>
    <name type="scientific">Brucella melitensis biotype 1 (strain ATCC 23456 / CCUG 17765 / NCTC 10094 / 16M)</name>
    <dbReference type="NCBI Taxonomy" id="224914"/>
    <lineage>
        <taxon>Bacteria</taxon>
        <taxon>Pseudomonadati</taxon>
        <taxon>Pseudomonadota</taxon>
        <taxon>Alphaproteobacteria</taxon>
        <taxon>Hyphomicrobiales</taxon>
        <taxon>Brucellaceae</taxon>
        <taxon>Brucella/Ochrobactrum group</taxon>
        <taxon>Brucella</taxon>
    </lineage>
</organism>
<keyword id="KW-0997">Cell inner membrane</keyword>
<keyword id="KW-1003">Cell membrane</keyword>
<keyword id="KW-0472">Membrane</keyword>